<name>SSEL_SALCH</name>
<keyword id="KW-1035">Host cytoplasm</keyword>
<keyword id="KW-0378">Hydrolase</keyword>
<keyword id="KW-0645">Protease</keyword>
<keyword id="KW-0964">Secreted</keyword>
<keyword id="KW-0788">Thiol protease</keyword>
<keyword id="KW-0843">Virulence</keyword>
<proteinExistence type="inferred from homology"/>
<reference key="1">
    <citation type="journal article" date="2005" name="Nucleic Acids Res.">
        <title>The genome sequence of Salmonella enterica serovar Choleraesuis, a highly invasive and resistant zoonotic pathogen.</title>
        <authorList>
            <person name="Chiu C.-H."/>
            <person name="Tang P."/>
            <person name="Chu C."/>
            <person name="Hu S."/>
            <person name="Bao Q."/>
            <person name="Yu J."/>
            <person name="Chou Y.-Y."/>
            <person name="Wang H.-S."/>
            <person name="Lee Y.-S."/>
        </authorList>
    </citation>
    <scope>NUCLEOTIDE SEQUENCE [LARGE SCALE GENOMIC DNA]</scope>
    <source>
        <strain>SC-B67</strain>
    </source>
</reference>
<evidence type="ECO:0000250" key="1"/>
<evidence type="ECO:0000305" key="2"/>
<accession>Q57M66</accession>
<organism>
    <name type="scientific">Salmonella choleraesuis (strain SC-B67)</name>
    <dbReference type="NCBI Taxonomy" id="321314"/>
    <lineage>
        <taxon>Bacteria</taxon>
        <taxon>Pseudomonadati</taxon>
        <taxon>Pseudomonadota</taxon>
        <taxon>Gammaproteobacteria</taxon>
        <taxon>Enterobacterales</taxon>
        <taxon>Enterobacteriaceae</taxon>
        <taxon>Salmonella</taxon>
    </lineage>
</organism>
<feature type="chain" id="PRO_0000323571" description="Deubiquitinase SseL">
    <location>
        <begin position="1"/>
        <end position="340"/>
    </location>
</feature>
<feature type="active site" evidence="1">
    <location>
        <position position="223"/>
    </location>
</feature>
<feature type="active site" description="Nucleophile" evidence="1">
    <location>
        <position position="285"/>
    </location>
</feature>
<gene>
    <name type="primary">sseL</name>
    <name type="synonym">elaD</name>
    <name type="ordered locus">SCH_2290</name>
</gene>
<sequence>MNICVNSLYRLSTPQFHSLYSEDVSDEVLALLIGEVENGNQNCIDLLCNLALRNDDLGHKVEKLLFDLFSGKRSGSPDIDKKINQACLVLHQIANNDITKNNTEWKKLHAPSRLLYMAGSATTDLSKKIGIAHKIMGDQFAQTDQEQVGVENLWCSARMLSSDELAAATQGLVQESPFLSVNYPIGLIHPTTKENILSTQLLEKMAQSGLSENEVFLINTGDHWLICLFYKLAEKIKCLIFNTYYDLNENTKQEIIEAAKIAGISESDEVNFIEMNLQNNVPNGCSLFCYHTIQLLSNAGQNDPVTTLREFAEKFLTLSVEEQALFNTQTRRQIYEYSLQ</sequence>
<protein>
    <recommendedName>
        <fullName>Deubiquitinase SseL</fullName>
        <ecNumber>3.4.22.-</ecNumber>
    </recommendedName>
    <alternativeName>
        <fullName>Deubiquitinating enzyme</fullName>
        <shortName>DUB</shortName>
    </alternativeName>
    <alternativeName>
        <fullName>Deubiquitinating protease</fullName>
    </alternativeName>
    <alternativeName>
        <fullName>Salmonella secreted effector L</fullName>
    </alternativeName>
</protein>
<comment type="function">
    <text evidence="1">Effector proteins function to alter host cell physiology and promote bacterial survival in host tissues. This protease targets the host cell ubiquitin pathway by acting as a deubiquitinase in infected host cells (By similarity).</text>
</comment>
<comment type="subcellular location">
    <subcellularLocation>
        <location evidence="1">Secreted</location>
    </subcellularLocation>
    <subcellularLocation>
        <location evidence="1">Host cytoplasm</location>
    </subcellularLocation>
    <text evidence="1">Secreted via type III secretion system 2 (SPI-2 T3SS), and delivered into the host cytoplasm. In phagocytic cells localizes to the Salmonella-containing vacuole (SCV). In epithelial cells localizes to the Salmonella-containing vacuole (SCV) and to the Salmonella-induced filaments (Sifs), which are tubular membrane extensions from the SCV that are formed at late stages of infection (By similarity).</text>
</comment>
<comment type="similarity">
    <text evidence="2">Belongs to the peptidase C79 family.</text>
</comment>
<dbReference type="EC" id="3.4.22.-"/>
<dbReference type="EMBL" id="AE017220">
    <property type="protein sequence ID" value="AAX66196.1"/>
    <property type="molecule type" value="Genomic_DNA"/>
</dbReference>
<dbReference type="RefSeq" id="WP_011264333.1">
    <property type="nucleotide sequence ID" value="NC_006905.1"/>
</dbReference>
<dbReference type="SMR" id="Q57M66"/>
<dbReference type="KEGG" id="sec:SCH_2290"/>
<dbReference type="HOGENOM" id="CLU_069513_0_0_6"/>
<dbReference type="Proteomes" id="UP000000538">
    <property type="component" value="Chromosome"/>
</dbReference>
<dbReference type="GO" id="GO:0005576">
    <property type="term" value="C:extracellular region"/>
    <property type="evidence" value="ECO:0007669"/>
    <property type="project" value="UniProtKB-SubCell"/>
</dbReference>
<dbReference type="GO" id="GO:0030430">
    <property type="term" value="C:host cell cytoplasm"/>
    <property type="evidence" value="ECO:0007669"/>
    <property type="project" value="UniProtKB-SubCell"/>
</dbReference>
<dbReference type="GO" id="GO:0008234">
    <property type="term" value="F:cysteine-type peptidase activity"/>
    <property type="evidence" value="ECO:0007669"/>
    <property type="project" value="UniProtKB-KW"/>
</dbReference>
<dbReference type="GO" id="GO:0006508">
    <property type="term" value="P:proteolysis"/>
    <property type="evidence" value="ECO:0007669"/>
    <property type="project" value="UniProtKB-KW"/>
</dbReference>
<dbReference type="InterPro" id="IPR054329">
    <property type="entry name" value="ElaD/SseL-like_N"/>
</dbReference>
<dbReference type="InterPro" id="IPR054328">
    <property type="entry name" value="SseL-like_C"/>
</dbReference>
<dbReference type="NCBIfam" id="NF008812">
    <property type="entry name" value="PRK11836.1"/>
    <property type="match status" value="1"/>
</dbReference>
<dbReference type="NCBIfam" id="NF011421">
    <property type="entry name" value="PRK14848.1"/>
    <property type="match status" value="1"/>
</dbReference>
<dbReference type="Pfam" id="PF22102">
    <property type="entry name" value="ElaD-SseL-like_C"/>
    <property type="match status" value="1"/>
</dbReference>
<dbReference type="Pfam" id="PF22103">
    <property type="entry name" value="ElaD_SseL-like_N"/>
    <property type="match status" value="1"/>
</dbReference>